<sequence>MSDMHAASREALAKVSSDLDTALKADNTVAVAAQAGTELFDVVEVLDGDRGLRVAVADSSKDAQQRVGLIGAVFGGKVSQVTLEILKDAAEQTWSTPREFRTGLVGLGRRALLRSAEMQGQLGRVEDELFRLSRILDRESQLTQLLSDRTQDSAARRDLLAKVLYGKVTSVTEALALQVIGRPEHNPIDDVAALAAAAAKLQGRSVAHVVSAVDLNDGQQQALADKLGRIYGRAMSIHSEVDTSLLGGMVIRVGDEVIDGSTSGKLERLRATFA</sequence>
<name>ATPD_COREF</name>
<gene>
    <name evidence="1" type="primary">atpH</name>
    <name type="ordered locus">CE1312</name>
</gene>
<evidence type="ECO:0000255" key="1">
    <source>
        <dbReference type="HAMAP-Rule" id="MF_01416"/>
    </source>
</evidence>
<dbReference type="EMBL" id="BA000035">
    <property type="protein sequence ID" value="BAC18122.1"/>
    <property type="molecule type" value="Genomic_DNA"/>
</dbReference>
<dbReference type="SMR" id="Q8FQ23"/>
<dbReference type="STRING" id="196164.gene:10741721"/>
<dbReference type="KEGG" id="cef:CE1312"/>
<dbReference type="eggNOG" id="COG0712">
    <property type="taxonomic scope" value="Bacteria"/>
</dbReference>
<dbReference type="HOGENOM" id="CLU_088880_0_0_11"/>
<dbReference type="Proteomes" id="UP000001409">
    <property type="component" value="Chromosome"/>
</dbReference>
<dbReference type="GO" id="GO:0005886">
    <property type="term" value="C:plasma membrane"/>
    <property type="evidence" value="ECO:0007669"/>
    <property type="project" value="UniProtKB-SubCell"/>
</dbReference>
<dbReference type="GO" id="GO:0045259">
    <property type="term" value="C:proton-transporting ATP synthase complex"/>
    <property type="evidence" value="ECO:0007669"/>
    <property type="project" value="UniProtKB-KW"/>
</dbReference>
<dbReference type="GO" id="GO:0046933">
    <property type="term" value="F:proton-transporting ATP synthase activity, rotational mechanism"/>
    <property type="evidence" value="ECO:0007669"/>
    <property type="project" value="UniProtKB-UniRule"/>
</dbReference>
<dbReference type="HAMAP" id="MF_01416">
    <property type="entry name" value="ATP_synth_delta_bact"/>
    <property type="match status" value="1"/>
</dbReference>
<dbReference type="InterPro" id="IPR020781">
    <property type="entry name" value="ATPase_OSCP/d_CS"/>
</dbReference>
<dbReference type="InterPro" id="IPR000711">
    <property type="entry name" value="ATPase_OSCP/dsu"/>
</dbReference>
<dbReference type="NCBIfam" id="TIGR01145">
    <property type="entry name" value="ATP_synt_delta"/>
    <property type="match status" value="1"/>
</dbReference>
<dbReference type="NCBIfam" id="NF009967">
    <property type="entry name" value="PRK13430.1"/>
    <property type="match status" value="1"/>
</dbReference>
<dbReference type="PANTHER" id="PTHR11910">
    <property type="entry name" value="ATP SYNTHASE DELTA CHAIN"/>
    <property type="match status" value="1"/>
</dbReference>
<dbReference type="Pfam" id="PF00213">
    <property type="entry name" value="OSCP"/>
    <property type="match status" value="1"/>
</dbReference>
<dbReference type="PRINTS" id="PR00125">
    <property type="entry name" value="ATPASEDELTA"/>
</dbReference>
<dbReference type="PROSITE" id="PS00389">
    <property type="entry name" value="ATPASE_DELTA"/>
    <property type="match status" value="1"/>
</dbReference>
<accession>Q8FQ23</accession>
<feature type="chain" id="PRO_1000184681" description="ATP synthase subunit delta">
    <location>
        <begin position="1"/>
        <end position="274"/>
    </location>
</feature>
<reference key="1">
    <citation type="journal article" date="2003" name="Genome Res.">
        <title>Comparative complete genome sequence analysis of the amino acid replacements responsible for the thermostability of Corynebacterium efficiens.</title>
        <authorList>
            <person name="Nishio Y."/>
            <person name="Nakamura Y."/>
            <person name="Kawarabayasi Y."/>
            <person name="Usuda Y."/>
            <person name="Kimura E."/>
            <person name="Sugimoto S."/>
            <person name="Matsui K."/>
            <person name="Yamagishi A."/>
            <person name="Kikuchi H."/>
            <person name="Ikeo K."/>
            <person name="Gojobori T."/>
        </authorList>
    </citation>
    <scope>NUCLEOTIDE SEQUENCE [LARGE SCALE GENOMIC DNA]</scope>
    <source>
        <strain>DSM 44549 / YS-314 / AJ 12310 / JCM 11189 / NBRC 100395</strain>
    </source>
</reference>
<keyword id="KW-0066">ATP synthesis</keyword>
<keyword id="KW-1003">Cell membrane</keyword>
<keyword id="KW-0139">CF(1)</keyword>
<keyword id="KW-0375">Hydrogen ion transport</keyword>
<keyword id="KW-0406">Ion transport</keyword>
<keyword id="KW-0472">Membrane</keyword>
<keyword id="KW-1185">Reference proteome</keyword>
<keyword id="KW-0813">Transport</keyword>
<proteinExistence type="inferred from homology"/>
<organism>
    <name type="scientific">Corynebacterium efficiens (strain DSM 44549 / YS-314 / AJ 12310 / JCM 11189 / NBRC 100395)</name>
    <dbReference type="NCBI Taxonomy" id="196164"/>
    <lineage>
        <taxon>Bacteria</taxon>
        <taxon>Bacillati</taxon>
        <taxon>Actinomycetota</taxon>
        <taxon>Actinomycetes</taxon>
        <taxon>Mycobacteriales</taxon>
        <taxon>Corynebacteriaceae</taxon>
        <taxon>Corynebacterium</taxon>
    </lineage>
</organism>
<comment type="function">
    <text evidence="1">F(1)F(0) ATP synthase produces ATP from ADP in the presence of a proton or sodium gradient. F-type ATPases consist of two structural domains, F(1) containing the extramembraneous catalytic core and F(0) containing the membrane proton channel, linked together by a central stalk and a peripheral stalk. During catalysis, ATP synthesis in the catalytic domain of F(1) is coupled via a rotary mechanism of the central stalk subunits to proton translocation.</text>
</comment>
<comment type="function">
    <text evidence="1">This protein is part of the stalk that links CF(0) to CF(1). It either transmits conformational changes from CF(0) to CF(1) or is implicated in proton conduction.</text>
</comment>
<comment type="subunit">
    <text evidence="1">F-type ATPases have 2 components, F(1) - the catalytic core - and F(0) - the membrane proton channel. F(1) has five subunits: alpha(3), beta(3), gamma(1), delta(1), epsilon(1). F(0) has three main subunits: a(1), b(2) and c(10-14). The alpha and beta chains form an alternating ring which encloses part of the gamma chain. F(1) is attached to F(0) by a central stalk formed by the gamma and epsilon chains, while a peripheral stalk is formed by the delta and b chains.</text>
</comment>
<comment type="subcellular location">
    <subcellularLocation>
        <location evidence="1">Cell membrane</location>
        <topology evidence="1">Peripheral membrane protein</topology>
    </subcellularLocation>
</comment>
<comment type="similarity">
    <text evidence="1">Belongs to the ATPase delta chain family.</text>
</comment>
<protein>
    <recommendedName>
        <fullName evidence="1">ATP synthase subunit delta</fullName>
    </recommendedName>
    <alternativeName>
        <fullName evidence="1">ATP synthase F(1) sector subunit delta</fullName>
    </alternativeName>
    <alternativeName>
        <fullName evidence="1">F-type ATPase subunit delta</fullName>
        <shortName evidence="1">F-ATPase subunit delta</shortName>
    </alternativeName>
</protein>